<gene>
    <name evidence="1" type="primary">ubiE</name>
    <name type="ordered locus">ECIAI1_4028</name>
</gene>
<sequence length="251" mass="28073">MVDKSQETTHFGFQTVAKEQKADMVAHVFHSVASKYDVMNDLMSFGIHRLWKRFTIDCSGVRRGQTVLDLAGGTGDLTAKFSRLVGETGKVVLADINESMLKMGREKLRNIGVIGNVEYVQANAEALPFPDNTFDCITISFGLRNVTDKDKALRSMYRVLKPGGRLLVLEFSKPIIEPLSKAYDAYSFHVLPRIGSLVANDADSYRYLAESIRMHPDQDTLKAMMQDAGFESVDYYNLTAGVVALHRGYKF</sequence>
<reference key="1">
    <citation type="journal article" date="2009" name="PLoS Genet.">
        <title>Organised genome dynamics in the Escherichia coli species results in highly diverse adaptive paths.</title>
        <authorList>
            <person name="Touchon M."/>
            <person name="Hoede C."/>
            <person name="Tenaillon O."/>
            <person name="Barbe V."/>
            <person name="Baeriswyl S."/>
            <person name="Bidet P."/>
            <person name="Bingen E."/>
            <person name="Bonacorsi S."/>
            <person name="Bouchier C."/>
            <person name="Bouvet O."/>
            <person name="Calteau A."/>
            <person name="Chiapello H."/>
            <person name="Clermont O."/>
            <person name="Cruveiller S."/>
            <person name="Danchin A."/>
            <person name="Diard M."/>
            <person name="Dossat C."/>
            <person name="Karoui M.E."/>
            <person name="Frapy E."/>
            <person name="Garry L."/>
            <person name="Ghigo J.M."/>
            <person name="Gilles A.M."/>
            <person name="Johnson J."/>
            <person name="Le Bouguenec C."/>
            <person name="Lescat M."/>
            <person name="Mangenot S."/>
            <person name="Martinez-Jehanne V."/>
            <person name="Matic I."/>
            <person name="Nassif X."/>
            <person name="Oztas S."/>
            <person name="Petit M.A."/>
            <person name="Pichon C."/>
            <person name="Rouy Z."/>
            <person name="Ruf C.S."/>
            <person name="Schneider D."/>
            <person name="Tourret J."/>
            <person name="Vacherie B."/>
            <person name="Vallenet D."/>
            <person name="Medigue C."/>
            <person name="Rocha E.P.C."/>
            <person name="Denamur E."/>
        </authorList>
    </citation>
    <scope>NUCLEOTIDE SEQUENCE [LARGE SCALE GENOMIC DNA]</scope>
    <source>
        <strain>IAI1</strain>
    </source>
</reference>
<comment type="function">
    <text evidence="1">Methyltransferase required for the conversion of demethylmenaquinol (DMKH2) to menaquinol (MKH2) and the conversion of 2-polyprenyl-6-methoxy-1,4-benzoquinol (DDMQH2) to 2-polyprenyl-3-methyl-6-methoxy-1,4-benzoquinol (DMQH2).</text>
</comment>
<comment type="catalytic activity">
    <reaction evidence="1">
        <text>a 2-demethylmenaquinol + S-adenosyl-L-methionine = a menaquinol + S-adenosyl-L-homocysteine + H(+)</text>
        <dbReference type="Rhea" id="RHEA:42640"/>
        <dbReference type="Rhea" id="RHEA-COMP:9539"/>
        <dbReference type="Rhea" id="RHEA-COMP:9563"/>
        <dbReference type="ChEBI" id="CHEBI:15378"/>
        <dbReference type="ChEBI" id="CHEBI:18151"/>
        <dbReference type="ChEBI" id="CHEBI:55437"/>
        <dbReference type="ChEBI" id="CHEBI:57856"/>
        <dbReference type="ChEBI" id="CHEBI:59789"/>
        <dbReference type="EC" id="2.1.1.163"/>
    </reaction>
</comment>
<comment type="catalytic activity">
    <reaction evidence="1">
        <text>a 2-methoxy-6-(all-trans-polyprenyl)benzene-1,4-diol + S-adenosyl-L-methionine = a 5-methoxy-2-methyl-3-(all-trans-polyprenyl)benzene-1,4-diol + S-adenosyl-L-homocysteine + H(+)</text>
        <dbReference type="Rhea" id="RHEA:28286"/>
        <dbReference type="Rhea" id="RHEA-COMP:10858"/>
        <dbReference type="Rhea" id="RHEA-COMP:10859"/>
        <dbReference type="ChEBI" id="CHEBI:15378"/>
        <dbReference type="ChEBI" id="CHEBI:57856"/>
        <dbReference type="ChEBI" id="CHEBI:59789"/>
        <dbReference type="ChEBI" id="CHEBI:84166"/>
        <dbReference type="ChEBI" id="CHEBI:84167"/>
        <dbReference type="EC" id="2.1.1.201"/>
    </reaction>
</comment>
<comment type="pathway">
    <text evidence="1">Quinol/quinone metabolism; menaquinone biosynthesis; menaquinol from 1,4-dihydroxy-2-naphthoate: step 2/2.</text>
</comment>
<comment type="pathway">
    <text evidence="1">Cofactor biosynthesis; ubiquinone biosynthesis.</text>
</comment>
<comment type="similarity">
    <text evidence="1">Belongs to the class I-like SAM-binding methyltransferase superfamily. MenG/UbiE family.</text>
</comment>
<keyword id="KW-0474">Menaquinone biosynthesis</keyword>
<keyword id="KW-0489">Methyltransferase</keyword>
<keyword id="KW-0949">S-adenosyl-L-methionine</keyword>
<keyword id="KW-0808">Transferase</keyword>
<keyword id="KW-0831">Ubiquinone biosynthesis</keyword>
<proteinExistence type="inferred from homology"/>
<feature type="chain" id="PRO_1000187760" description="Ubiquinone/menaquinone biosynthesis C-methyltransferase UbiE">
    <location>
        <begin position="1"/>
        <end position="251"/>
    </location>
</feature>
<feature type="binding site" evidence="1">
    <location>
        <position position="74"/>
    </location>
    <ligand>
        <name>S-adenosyl-L-methionine</name>
        <dbReference type="ChEBI" id="CHEBI:59789"/>
    </ligand>
</feature>
<feature type="binding site" evidence="1">
    <location>
        <position position="95"/>
    </location>
    <ligand>
        <name>S-adenosyl-L-methionine</name>
        <dbReference type="ChEBI" id="CHEBI:59789"/>
    </ligand>
</feature>
<feature type="binding site" evidence="1">
    <location>
        <begin position="123"/>
        <end position="124"/>
    </location>
    <ligand>
        <name>S-adenosyl-L-methionine</name>
        <dbReference type="ChEBI" id="CHEBI:59789"/>
    </ligand>
</feature>
<feature type="binding site" evidence="1">
    <location>
        <position position="140"/>
    </location>
    <ligand>
        <name>S-adenosyl-L-methionine</name>
        <dbReference type="ChEBI" id="CHEBI:59789"/>
    </ligand>
</feature>
<accession>B7M638</accession>
<protein>
    <recommendedName>
        <fullName evidence="1">Ubiquinone/menaquinone biosynthesis C-methyltransferase UbiE</fullName>
        <ecNumber evidence="1">2.1.1.163</ecNumber>
        <ecNumber evidence="1">2.1.1.201</ecNumber>
    </recommendedName>
    <alternativeName>
        <fullName evidence="1">2-methoxy-6-polyprenyl-1,4-benzoquinol methylase</fullName>
    </alternativeName>
    <alternativeName>
        <fullName evidence="1">Demethylmenaquinone methyltransferase</fullName>
    </alternativeName>
</protein>
<organism>
    <name type="scientific">Escherichia coli O8 (strain IAI1)</name>
    <dbReference type="NCBI Taxonomy" id="585034"/>
    <lineage>
        <taxon>Bacteria</taxon>
        <taxon>Pseudomonadati</taxon>
        <taxon>Pseudomonadota</taxon>
        <taxon>Gammaproteobacteria</taxon>
        <taxon>Enterobacterales</taxon>
        <taxon>Enterobacteriaceae</taxon>
        <taxon>Escherichia</taxon>
    </lineage>
</organism>
<evidence type="ECO:0000255" key="1">
    <source>
        <dbReference type="HAMAP-Rule" id="MF_01813"/>
    </source>
</evidence>
<dbReference type="EC" id="2.1.1.163" evidence="1"/>
<dbReference type="EC" id="2.1.1.201" evidence="1"/>
<dbReference type="EMBL" id="CU928160">
    <property type="protein sequence ID" value="CAR00809.1"/>
    <property type="molecule type" value="Genomic_DNA"/>
</dbReference>
<dbReference type="RefSeq" id="WP_000227958.1">
    <property type="nucleotide sequence ID" value="NC_011741.1"/>
</dbReference>
<dbReference type="SMR" id="B7M638"/>
<dbReference type="GeneID" id="93778102"/>
<dbReference type="KEGG" id="ecr:ECIAI1_4028"/>
<dbReference type="HOGENOM" id="CLU_037990_0_0_6"/>
<dbReference type="UniPathway" id="UPA00079">
    <property type="reaction ID" value="UER00169"/>
</dbReference>
<dbReference type="UniPathway" id="UPA00232"/>
<dbReference type="GO" id="GO:0008425">
    <property type="term" value="F:2-methoxy-6-polyprenyl-1,4-benzoquinol methyltransferase activity"/>
    <property type="evidence" value="ECO:0007669"/>
    <property type="project" value="UniProtKB-UniRule"/>
</dbReference>
<dbReference type="GO" id="GO:0043770">
    <property type="term" value="F:demethylmenaquinone methyltransferase activity"/>
    <property type="evidence" value="ECO:0007669"/>
    <property type="project" value="UniProtKB-UniRule"/>
</dbReference>
<dbReference type="GO" id="GO:0009060">
    <property type="term" value="P:aerobic respiration"/>
    <property type="evidence" value="ECO:0007669"/>
    <property type="project" value="UniProtKB-UniRule"/>
</dbReference>
<dbReference type="GO" id="GO:0009234">
    <property type="term" value="P:menaquinone biosynthetic process"/>
    <property type="evidence" value="ECO:0007669"/>
    <property type="project" value="UniProtKB-UniRule"/>
</dbReference>
<dbReference type="GO" id="GO:0032259">
    <property type="term" value="P:methylation"/>
    <property type="evidence" value="ECO:0007669"/>
    <property type="project" value="UniProtKB-KW"/>
</dbReference>
<dbReference type="CDD" id="cd02440">
    <property type="entry name" value="AdoMet_MTases"/>
    <property type="match status" value="1"/>
</dbReference>
<dbReference type="FunFam" id="3.40.50.150:FF:000014">
    <property type="entry name" value="Ubiquinone/menaquinone biosynthesis C-methyltransferase UbiE"/>
    <property type="match status" value="1"/>
</dbReference>
<dbReference type="Gene3D" id="3.40.50.150">
    <property type="entry name" value="Vaccinia Virus protein VP39"/>
    <property type="match status" value="1"/>
</dbReference>
<dbReference type="HAMAP" id="MF_01813">
    <property type="entry name" value="MenG_UbiE_methyltr"/>
    <property type="match status" value="1"/>
</dbReference>
<dbReference type="InterPro" id="IPR029063">
    <property type="entry name" value="SAM-dependent_MTases_sf"/>
</dbReference>
<dbReference type="InterPro" id="IPR004033">
    <property type="entry name" value="UbiE/COQ5_MeTrFase"/>
</dbReference>
<dbReference type="InterPro" id="IPR023576">
    <property type="entry name" value="UbiE/COQ5_MeTrFase_CS"/>
</dbReference>
<dbReference type="NCBIfam" id="TIGR01934">
    <property type="entry name" value="MenG_MenH_UbiE"/>
    <property type="match status" value="1"/>
</dbReference>
<dbReference type="NCBIfam" id="NF001240">
    <property type="entry name" value="PRK00216.1-1"/>
    <property type="match status" value="1"/>
</dbReference>
<dbReference type="NCBIfam" id="NF001242">
    <property type="entry name" value="PRK00216.1-3"/>
    <property type="match status" value="1"/>
</dbReference>
<dbReference type="NCBIfam" id="NF001244">
    <property type="entry name" value="PRK00216.1-5"/>
    <property type="match status" value="1"/>
</dbReference>
<dbReference type="PANTHER" id="PTHR43591:SF24">
    <property type="entry name" value="2-METHOXY-6-POLYPRENYL-1,4-BENZOQUINOL METHYLASE, MITOCHONDRIAL"/>
    <property type="match status" value="1"/>
</dbReference>
<dbReference type="PANTHER" id="PTHR43591">
    <property type="entry name" value="METHYLTRANSFERASE"/>
    <property type="match status" value="1"/>
</dbReference>
<dbReference type="Pfam" id="PF01209">
    <property type="entry name" value="Ubie_methyltran"/>
    <property type="match status" value="1"/>
</dbReference>
<dbReference type="SUPFAM" id="SSF53335">
    <property type="entry name" value="S-adenosyl-L-methionine-dependent methyltransferases"/>
    <property type="match status" value="1"/>
</dbReference>
<dbReference type="PROSITE" id="PS51608">
    <property type="entry name" value="SAM_MT_UBIE"/>
    <property type="match status" value="1"/>
</dbReference>
<dbReference type="PROSITE" id="PS01183">
    <property type="entry name" value="UBIE_1"/>
    <property type="match status" value="1"/>
</dbReference>
<dbReference type="PROSITE" id="PS01184">
    <property type="entry name" value="UBIE_2"/>
    <property type="match status" value="1"/>
</dbReference>
<name>UBIE_ECO8A</name>